<dbReference type="GO" id="GO:0005576">
    <property type="term" value="C:extracellular region"/>
    <property type="evidence" value="ECO:0007669"/>
    <property type="project" value="UniProtKB-SubCell"/>
</dbReference>
<dbReference type="GO" id="GO:0030550">
    <property type="term" value="F:acetylcholine receptor inhibitor activity"/>
    <property type="evidence" value="ECO:0007669"/>
    <property type="project" value="UniProtKB-KW"/>
</dbReference>
<dbReference type="GO" id="GO:0099106">
    <property type="term" value="F:ion channel regulator activity"/>
    <property type="evidence" value="ECO:0007669"/>
    <property type="project" value="UniProtKB-KW"/>
</dbReference>
<dbReference type="GO" id="GO:0090729">
    <property type="term" value="F:toxin activity"/>
    <property type="evidence" value="ECO:0007669"/>
    <property type="project" value="UniProtKB-KW"/>
</dbReference>
<dbReference type="Gene3D" id="2.10.60.10">
    <property type="entry name" value="CD59"/>
    <property type="match status" value="1"/>
</dbReference>
<dbReference type="InterPro" id="IPR045860">
    <property type="entry name" value="Snake_toxin-like_sf"/>
</dbReference>
<sequence length="43" mass="4710">LICYVSRDGKTATCPPQGKCEKYAVSASHTXHXFYVYGCTSXC</sequence>
<organism>
    <name type="scientific">Micrurus pyrrhocryptus</name>
    <name type="common">Coral snake</name>
    <dbReference type="NCBI Taxonomy" id="129468"/>
    <lineage>
        <taxon>Eukaryota</taxon>
        <taxon>Metazoa</taxon>
        <taxon>Chordata</taxon>
        <taxon>Craniata</taxon>
        <taxon>Vertebrata</taxon>
        <taxon>Euteleostomi</taxon>
        <taxon>Lepidosauria</taxon>
        <taxon>Squamata</taxon>
        <taxon>Bifurcata</taxon>
        <taxon>Unidentata</taxon>
        <taxon>Episquamata</taxon>
        <taxon>Toxicofera</taxon>
        <taxon>Serpentes</taxon>
        <taxon>Colubroidea</taxon>
        <taxon>Elapidae</taxon>
        <taxon>Elapinae</taxon>
        <taxon>Micrurus</taxon>
    </lineage>
</organism>
<keyword id="KW-0008">Acetylcholine receptor inhibiting toxin</keyword>
<keyword id="KW-0903">Direct protein sequencing</keyword>
<keyword id="KW-1015">Disulfide bond</keyword>
<keyword id="KW-0872">Ion channel impairing toxin</keyword>
<keyword id="KW-0528">Neurotoxin</keyword>
<keyword id="KW-0629">Postsynaptic neurotoxin</keyword>
<keyword id="KW-0964">Secreted</keyword>
<keyword id="KW-0800">Toxin</keyword>
<reference key="1">
    <citation type="journal article" date="2009" name="Toxicon">
        <title>Biochemical characterization of the Micrurus pyrrhocryptus venom.</title>
        <authorList>
            <person name="Dokmetjian J.C."/>
            <person name="Del Canto S."/>
            <person name="Vinzon S."/>
            <person name="de Jimenez Bonino M.B."/>
        </authorList>
    </citation>
    <scope>PROTEIN SEQUENCE</scope>
    <scope>MASS SPECTROMETRY</scope>
    <scope>SUBCELLULAR LOCATION</scope>
    <source>
        <tissue>Venom</tissue>
    </source>
</reference>
<accession>P0CAR7</accession>
<comment type="function">
    <text evidence="2">Neurotoxin. Blocks muscular nicotinic acetylcholine receptors (nAChR).</text>
</comment>
<comment type="subcellular location">
    <subcellularLocation>
        <location evidence="3">Secreted</location>
    </subcellularLocation>
</comment>
<comment type="tissue specificity">
    <text evidence="5">Expressed by the venom gland.</text>
</comment>
<comment type="mass spectrometry" mass="6556.0" method="Electrospray" evidence="3"/>
<comment type="similarity">
    <text evidence="5">Belongs to the three-finger toxin family. Short-chain subfamily.</text>
</comment>
<protein>
    <recommendedName>
        <fullName evidence="4">Venom protein E2</fullName>
    </recommendedName>
    <alternativeName>
        <fullName>Three-finger toxin</fullName>
        <shortName>3FTx</shortName>
    </alternativeName>
</protein>
<name>3SX_MICPY</name>
<feature type="chain" id="PRO_0000377753" description="Venom protein E2" evidence="3">
    <location>
        <begin position="1"/>
        <end position="43" status="greater than"/>
    </location>
</feature>
<feature type="disulfide bond" evidence="1">
    <location>
        <begin position="3"/>
        <end position="20"/>
    </location>
</feature>
<feature type="disulfide bond" evidence="1">
    <location>
        <begin position="14"/>
        <end position="39"/>
    </location>
</feature>
<feature type="non-terminal residue">
    <location>
        <position position="43"/>
    </location>
</feature>
<proteinExistence type="evidence at protein level"/>
<evidence type="ECO:0000250" key="1">
    <source>
        <dbReference type="UniProtKB" id="P60301"/>
    </source>
</evidence>
<evidence type="ECO:0000250" key="2">
    <source>
        <dbReference type="UniProtKB" id="P86421"/>
    </source>
</evidence>
<evidence type="ECO:0000269" key="3">
    <source>
    </source>
</evidence>
<evidence type="ECO:0000303" key="4">
    <source>
    </source>
</evidence>
<evidence type="ECO:0000305" key="5"/>